<accession>Q16S21</accession>
<accession>A0A6I8TPF2</accession>
<sequence length="521" mass="58909">MANMDIDEFKEFGKAAIDFVADYLVNIRDRDVLPSVEPGYLHDLLPNEIPEKGDDWKTIMEEFKRFIVPGLTHWQSPHFHAFYPSQTSYSSIVGETLAAGLGVVGFSWICSPVCTELEVIMMNWIGQLLNLPRCFLNCDEGNGGGVIQGSASESIFIAVLVAREQAVRRLKNEHPELTEAEIRGRLVAYTSDQSNSAVEKSGILGAIKMRLLPADDDCVLRGRTLKKAVEEDKANGLFPVIMVATLGTTGTCAYDNLEEIGPYCNDNKLWLHVDAAYAGASFCLPEYAWIKKGLEMADSLNFNLHKWLFVNFDCCAMWFKDAAMITEAFSVDRIYLQHKFQGMSKAPDYRHWQIQLGRRFRSLKVWITLKTMGAEKIRELIRFHISLAQKFEQYVRADPRFEVTSSTLALVCFRLKGEDTYSKQLLDNIVKRKKIYMIPATYQGKFILRFMIAGIDPQAEDIDYAWNEVKSQTDLLLGVDDNGNNVCSKKLIKEEIFEKDNPVGKITESLGGLVLANEKAQ</sequence>
<comment type="function">
    <text evidence="1 2">Catalyzes the decarboxylation-oxidative deamination of L-3,4-dihydroxyphenylalanine (L-DOPA) to 3,4-dihydroxylphenylacetaldehyde (DHPAA) (PubMed:21283636). Involved in cuticle development (PubMed:31234914). Probably responsible for the protein cross-linking during the development of flexible cuticles (PubMed:21283636, PubMed:31234914).</text>
</comment>
<comment type="catalytic activity">
    <reaction evidence="1">
        <text>L-dopa + O2 + H2O + H(+) = 3,4-dihydroxyphenylacetaldehyde + H2O2 + NH4(+) + CO2</text>
        <dbReference type="Rhea" id="RHEA:55524"/>
        <dbReference type="ChEBI" id="CHEBI:15377"/>
        <dbReference type="ChEBI" id="CHEBI:15378"/>
        <dbReference type="ChEBI" id="CHEBI:15379"/>
        <dbReference type="ChEBI" id="CHEBI:16240"/>
        <dbReference type="ChEBI" id="CHEBI:16526"/>
        <dbReference type="ChEBI" id="CHEBI:27978"/>
        <dbReference type="ChEBI" id="CHEBI:28938"/>
        <dbReference type="ChEBI" id="CHEBI:57504"/>
        <dbReference type="EC" id="4.1.1.107"/>
    </reaction>
    <physiologicalReaction direction="left-to-right" evidence="1">
        <dbReference type="Rhea" id="RHEA:55525"/>
    </physiologicalReaction>
</comment>
<comment type="cofactor">
    <cofactor evidence="5">
        <name>pyridoxal 5'-phosphate</name>
        <dbReference type="ChEBI" id="CHEBI:597326"/>
    </cofactor>
</comment>
<comment type="tissue specificity">
    <text evidence="2">Highly expressed in the cuticle and midgut. Low expression in the head and thorax.</text>
</comment>
<comment type="disruption phenotype">
    <text evidence="2">Arrest of larva growing and development (PubMed:31234914). Abnormal formation of the endocuticle (PubMed:31234914).</text>
</comment>
<comment type="similarity">
    <text evidence="5">Belongs to the group II decarboxylase family.</text>
</comment>
<reference key="1">
    <citation type="journal article" date="2007" name="Science">
        <title>Genome sequence of Aedes aegypti, a major arbovirus vector.</title>
        <authorList>
            <person name="Nene V."/>
            <person name="Wortman J.R."/>
            <person name="Lawson D."/>
            <person name="Haas B.J."/>
            <person name="Kodira C.D."/>
            <person name="Tu Z.J."/>
            <person name="Loftus B.J."/>
            <person name="Xi Z."/>
            <person name="Megy K."/>
            <person name="Grabherr M."/>
            <person name="Ren Q."/>
            <person name="Zdobnov E.M."/>
            <person name="Lobo N.F."/>
            <person name="Campbell K.S."/>
            <person name="Brown S.E."/>
            <person name="Bonaldo M.F."/>
            <person name="Zhu J."/>
            <person name="Sinkins S.P."/>
            <person name="Hogenkamp D.G."/>
            <person name="Amedeo P."/>
            <person name="Arensburger P."/>
            <person name="Atkinson P.W."/>
            <person name="Bidwell S.L."/>
            <person name="Biedler J."/>
            <person name="Birney E."/>
            <person name="Bruggner R.V."/>
            <person name="Costas J."/>
            <person name="Coy M.R."/>
            <person name="Crabtree J."/>
            <person name="Crawford M."/>
            <person name="DeBruyn B."/>
            <person name="DeCaprio D."/>
            <person name="Eiglmeier K."/>
            <person name="Eisenstadt E."/>
            <person name="El-Dorry H."/>
            <person name="Gelbart W.M."/>
            <person name="Gomes S.L."/>
            <person name="Hammond M."/>
            <person name="Hannick L.I."/>
            <person name="Hogan J.R."/>
            <person name="Holmes M.H."/>
            <person name="Jaffe D."/>
            <person name="Johnston S.J."/>
            <person name="Kennedy R.C."/>
            <person name="Koo H."/>
            <person name="Kravitz S."/>
            <person name="Kriventseva E.V."/>
            <person name="Kulp D."/>
            <person name="Labutti K."/>
            <person name="Lee E."/>
            <person name="Li S."/>
            <person name="Lovin D.D."/>
            <person name="Mao C."/>
            <person name="Mauceli E."/>
            <person name="Menck C.F."/>
            <person name="Miller J.R."/>
            <person name="Montgomery P."/>
            <person name="Mori A."/>
            <person name="Nascimento A.L."/>
            <person name="Naveira H.F."/>
            <person name="Nusbaum C."/>
            <person name="O'Leary S.B."/>
            <person name="Orvis J."/>
            <person name="Pertea M."/>
            <person name="Quesneville H."/>
            <person name="Reidenbach K.R."/>
            <person name="Rogers Y.-H.C."/>
            <person name="Roth C.W."/>
            <person name="Schneider J.R."/>
            <person name="Schatz M."/>
            <person name="Shumway M."/>
            <person name="Stanke M."/>
            <person name="Stinson E.O."/>
            <person name="Tubio J.M.C."/>
            <person name="Vanzee J.P."/>
            <person name="Verjovski-Almeida S."/>
            <person name="Werner D."/>
            <person name="White O.R."/>
            <person name="Wyder S."/>
            <person name="Zeng Q."/>
            <person name="Zhao Q."/>
            <person name="Zhao Y."/>
            <person name="Hill C.A."/>
            <person name="Raikhel A.S."/>
            <person name="Soares M.B."/>
            <person name="Knudson D.L."/>
            <person name="Lee N.H."/>
            <person name="Galagan J."/>
            <person name="Salzberg S.L."/>
            <person name="Paulsen I.T."/>
            <person name="Dimopoulos G."/>
            <person name="Collins F.H."/>
            <person name="Bruce B."/>
            <person name="Fraser-Liggett C.M."/>
            <person name="Severson D.W."/>
        </authorList>
    </citation>
    <scope>NUCLEOTIDE SEQUENCE [LARGE SCALE GENOMIC DNA]</scope>
</reference>
<reference key="2">
    <citation type="submission" date="2017-06" db="EMBL/GenBank/DDBJ databases">
        <title>Aedes aegypti genome working group (AGWG) sequencing and assembly.</title>
        <authorList>
            <consortium name="Aedes aegypti Genome Working Group (AGWG)"/>
            <person name="Matthews B.J."/>
        </authorList>
    </citation>
    <scope>NUCLEOTIDE SEQUENCE [LARGE SCALE GENOMIC DNA]</scope>
    <source>
        <strain>LVP_AGWG</strain>
    </source>
</reference>
<reference key="3">
    <citation type="journal article" date="2011" name="PLoS ONE">
        <title>From L-dopa to dihydroxyphenylacetaldehyde: a toxic biochemical pathway plays a vital physiological function in insects.</title>
        <authorList>
            <person name="Vavricka C."/>
            <person name="Han Q."/>
            <person name="Huang Y."/>
            <person name="Erickson S.M."/>
            <person name="Harich K."/>
            <person name="Christensen B.M."/>
            <person name="Li J."/>
        </authorList>
    </citation>
    <scope>FUNCTION</scope>
    <scope>CATALYTIC ACTIVITY</scope>
</reference>
<reference key="4">
    <citation type="journal article" date="2018" name="Dev. Comp. Immunol.">
        <title>3,4-Dihydroxyphenylacetaldehyde synthase and cuticle formation in insects.</title>
        <authorList>
            <person name="Liao C."/>
            <person name="Upadhyay A."/>
            <person name="Liang J."/>
            <person name="Han Q."/>
            <person name="Li J."/>
        </authorList>
    </citation>
    <scope>REVIEW</scope>
</reference>
<reference key="5">
    <citation type="journal article" date="2019" name="Parasit. Vectors">
        <title>RNA interference-mediated knockdown of 3, 4-dihydroxyphenylacetaldehyde synthase affects larval development and adult survival in the mosquito Aedes aegypti.</title>
        <authorList>
            <person name="Chen J."/>
            <person name="Lu H.R."/>
            <person name="Zhang L."/>
            <person name="Liao C.H."/>
            <person name="Han Q."/>
        </authorList>
    </citation>
    <scope>DISRUPTION PHENOTYPE</scope>
    <scope>TISSUE SPECIFICITY</scope>
    <scope>FUNCTION</scope>
</reference>
<feature type="chain" id="PRO_0000446129" description="3,4-dihydroxyphenylacetaldehyde synthase">
    <location>
        <begin position="1"/>
        <end position="521"/>
    </location>
</feature>
<feature type="modified residue" description="N6-(pyridoxal phosphate)lysine" evidence="5">
    <location>
        <position position="306"/>
    </location>
</feature>
<feature type="sequence conflict" description="In Ref. 2." evidence="5" ref="2">
    <original>T</original>
    <variation>I</variation>
    <location>
        <position position="224"/>
    </location>
</feature>
<proteinExistence type="evidence at protein level"/>
<evidence type="ECO:0000269" key="1">
    <source>
    </source>
</evidence>
<evidence type="ECO:0000269" key="2">
    <source>
    </source>
</evidence>
<evidence type="ECO:0000303" key="3">
    <source>
    </source>
</evidence>
<evidence type="ECO:0000303" key="4">
    <source>
    </source>
</evidence>
<evidence type="ECO:0000305" key="5"/>
<evidence type="ECO:0000312" key="6">
    <source>
        <dbReference type="EMBL" id="EAT37247.1"/>
    </source>
</evidence>
<dbReference type="EC" id="4.1.1.107" evidence="1"/>
<dbReference type="EMBL" id="CH477689">
    <property type="protein sequence ID" value="EAT37247.1"/>
    <property type="molecule type" value="Genomic_DNA"/>
</dbReference>
<dbReference type="RefSeq" id="XP_001661057.1">
    <property type="nucleotide sequence ID" value="XM_001661007.1"/>
</dbReference>
<dbReference type="SMR" id="Q16S21"/>
<dbReference type="FunCoup" id="Q16S21">
    <property type="interactions" value="50"/>
</dbReference>
<dbReference type="STRING" id="7159.Q16S21"/>
<dbReference type="PaxDb" id="7159-AAEL018197-PA"/>
<dbReference type="GeneID" id="5573809"/>
<dbReference type="KEGG" id="aag:5573809"/>
<dbReference type="VEuPathDB" id="VectorBase:AAEL022306"/>
<dbReference type="HOGENOM" id="CLU_011856_3_1_1"/>
<dbReference type="InParanoid" id="Q16S21"/>
<dbReference type="OMA" id="VWITLRT"/>
<dbReference type="OrthoDB" id="639767at2759"/>
<dbReference type="PhylomeDB" id="Q16S21"/>
<dbReference type="Proteomes" id="UP000008820">
    <property type="component" value="Chromosome 2"/>
</dbReference>
<dbReference type="Proteomes" id="UP000682892">
    <property type="component" value="Unassembled WGS sequence"/>
</dbReference>
<dbReference type="GO" id="GO:0005737">
    <property type="term" value="C:cytoplasm"/>
    <property type="evidence" value="ECO:0007669"/>
    <property type="project" value="TreeGrafter"/>
</dbReference>
<dbReference type="GO" id="GO:0106425">
    <property type="term" value="F:3,4-dihydroxyphenylacetaldehyde synthase activity"/>
    <property type="evidence" value="ECO:0007669"/>
    <property type="project" value="UniProtKB-EC"/>
</dbReference>
<dbReference type="GO" id="GO:0004058">
    <property type="term" value="F:aromatic-L-amino-acid decarboxylase activity"/>
    <property type="evidence" value="ECO:0007669"/>
    <property type="project" value="TreeGrafter"/>
</dbReference>
<dbReference type="GO" id="GO:0030170">
    <property type="term" value="F:pyridoxal phosphate binding"/>
    <property type="evidence" value="ECO:0007669"/>
    <property type="project" value="InterPro"/>
</dbReference>
<dbReference type="GO" id="GO:0042302">
    <property type="term" value="F:structural constituent of cuticle"/>
    <property type="evidence" value="ECO:0007669"/>
    <property type="project" value="UniProtKB-KW"/>
</dbReference>
<dbReference type="GO" id="GO:0006520">
    <property type="term" value="P:amino acid metabolic process"/>
    <property type="evidence" value="ECO:0007669"/>
    <property type="project" value="InterPro"/>
</dbReference>
<dbReference type="GO" id="GO:0019752">
    <property type="term" value="P:carboxylic acid metabolic process"/>
    <property type="evidence" value="ECO:0007669"/>
    <property type="project" value="InterPro"/>
</dbReference>
<dbReference type="GO" id="GO:0006584">
    <property type="term" value="P:catecholamine metabolic process"/>
    <property type="evidence" value="ECO:0007669"/>
    <property type="project" value="UniProtKB-KW"/>
</dbReference>
<dbReference type="GO" id="GO:0042335">
    <property type="term" value="P:cuticle development"/>
    <property type="evidence" value="ECO:0000315"/>
    <property type="project" value="UniProtKB"/>
</dbReference>
<dbReference type="FunFam" id="1.20.1340.10:FF:000001">
    <property type="entry name" value="Histidine decarboxylase"/>
    <property type="match status" value="1"/>
</dbReference>
<dbReference type="FunFam" id="3.40.640.10:FF:000025">
    <property type="entry name" value="Histidine decarboxylase"/>
    <property type="match status" value="1"/>
</dbReference>
<dbReference type="Gene3D" id="3.90.1150.10">
    <property type="entry name" value="Aspartate Aminotransferase, domain 1"/>
    <property type="match status" value="1"/>
</dbReference>
<dbReference type="Gene3D" id="1.20.1340.10">
    <property type="entry name" value="dopa decarboxylase, N-terminal domain"/>
    <property type="match status" value="1"/>
</dbReference>
<dbReference type="Gene3D" id="3.40.640.10">
    <property type="entry name" value="Type I PLP-dependent aspartate aminotransferase-like (Major domain)"/>
    <property type="match status" value="1"/>
</dbReference>
<dbReference type="InterPro" id="IPR010977">
    <property type="entry name" value="Aromatic_deC"/>
</dbReference>
<dbReference type="InterPro" id="IPR002129">
    <property type="entry name" value="PyrdxlP-dep_de-COase"/>
</dbReference>
<dbReference type="InterPro" id="IPR015424">
    <property type="entry name" value="PyrdxlP-dep_Trfase"/>
</dbReference>
<dbReference type="InterPro" id="IPR015421">
    <property type="entry name" value="PyrdxlP-dep_Trfase_major"/>
</dbReference>
<dbReference type="InterPro" id="IPR015422">
    <property type="entry name" value="PyrdxlP-dep_Trfase_small"/>
</dbReference>
<dbReference type="InterPro" id="IPR021115">
    <property type="entry name" value="Pyridoxal-P_BS"/>
</dbReference>
<dbReference type="PANTHER" id="PTHR11999:SF60">
    <property type="entry name" value="3,4-DIHYDROXYPHENYLACETALDEHYDE SYNTHASE"/>
    <property type="match status" value="1"/>
</dbReference>
<dbReference type="PANTHER" id="PTHR11999">
    <property type="entry name" value="GROUP II PYRIDOXAL-5-PHOSPHATE DECARBOXYLASE"/>
    <property type="match status" value="1"/>
</dbReference>
<dbReference type="Pfam" id="PF00282">
    <property type="entry name" value="Pyridoxal_deC"/>
    <property type="match status" value="1"/>
</dbReference>
<dbReference type="PRINTS" id="PR00800">
    <property type="entry name" value="YHDCRBOXLASE"/>
</dbReference>
<dbReference type="SUPFAM" id="SSF53383">
    <property type="entry name" value="PLP-dependent transferases"/>
    <property type="match status" value="1"/>
</dbReference>
<dbReference type="PROSITE" id="PS00392">
    <property type="entry name" value="DDC_GAD_HDC_YDC"/>
    <property type="match status" value="1"/>
</dbReference>
<organism>
    <name type="scientific">Aedes aegypti</name>
    <name type="common">Yellowfever mosquito</name>
    <name type="synonym">Culex aegypti</name>
    <dbReference type="NCBI Taxonomy" id="7159"/>
    <lineage>
        <taxon>Eukaryota</taxon>
        <taxon>Metazoa</taxon>
        <taxon>Ecdysozoa</taxon>
        <taxon>Arthropoda</taxon>
        <taxon>Hexapoda</taxon>
        <taxon>Insecta</taxon>
        <taxon>Pterygota</taxon>
        <taxon>Neoptera</taxon>
        <taxon>Endopterygota</taxon>
        <taxon>Diptera</taxon>
        <taxon>Nematocera</taxon>
        <taxon>Culicoidea</taxon>
        <taxon>Culicidae</taxon>
        <taxon>Culicinae</taxon>
        <taxon>Aedini</taxon>
        <taxon>Aedes</taxon>
        <taxon>Stegomyia</taxon>
    </lineage>
</organism>
<keyword id="KW-0128">Catecholamine metabolism</keyword>
<keyword id="KW-0193">Cuticle</keyword>
<keyword id="KW-0456">Lyase</keyword>
<keyword id="KW-0663">Pyridoxal phosphate</keyword>
<keyword id="KW-1185">Reference proteome</keyword>
<protein>
    <recommendedName>
        <fullName evidence="3">3,4-dihydroxyphenylacetaldehyde synthase</fullName>
        <shortName>DHPAA synthase</shortName>
        <shortName evidence="4">DOPAL synthase</shortName>
        <ecNumber evidence="1">4.1.1.107</ecNumber>
    </recommendedName>
</protein>
<gene>
    <name evidence="6" type="ORF">AAEL010734</name>
</gene>
<name>DHPAA_AEDAE</name>